<feature type="chain" id="PRO_0000250139" description="3-isopropylmalate dehydrogenase">
    <location>
        <begin position="1"/>
        <end position="348"/>
    </location>
</feature>
<feature type="binding site" evidence="1">
    <location>
        <begin position="76"/>
        <end position="87"/>
    </location>
    <ligand>
        <name>NAD(+)</name>
        <dbReference type="ChEBI" id="CHEBI:57540"/>
    </ligand>
</feature>
<feature type="binding site" evidence="1">
    <location>
        <position position="94"/>
    </location>
    <ligand>
        <name>substrate</name>
    </ligand>
</feature>
<feature type="binding site" evidence="1">
    <location>
        <position position="104"/>
    </location>
    <ligand>
        <name>substrate</name>
    </ligand>
</feature>
<feature type="binding site" evidence="1">
    <location>
        <position position="132"/>
    </location>
    <ligand>
        <name>substrate</name>
    </ligand>
</feature>
<feature type="binding site" evidence="1">
    <location>
        <position position="217"/>
    </location>
    <ligand>
        <name>Mg(2+)</name>
        <dbReference type="ChEBI" id="CHEBI:18420"/>
    </ligand>
</feature>
<feature type="binding site" evidence="1">
    <location>
        <position position="217"/>
    </location>
    <ligand>
        <name>substrate</name>
    </ligand>
</feature>
<feature type="binding site" evidence="1">
    <location>
        <position position="241"/>
    </location>
    <ligand>
        <name>Mg(2+)</name>
        <dbReference type="ChEBI" id="CHEBI:18420"/>
    </ligand>
</feature>
<feature type="binding site" evidence="1">
    <location>
        <position position="245"/>
    </location>
    <ligand>
        <name>Mg(2+)</name>
        <dbReference type="ChEBI" id="CHEBI:18420"/>
    </ligand>
</feature>
<feature type="binding site" evidence="1">
    <location>
        <begin position="275"/>
        <end position="287"/>
    </location>
    <ligand>
        <name>NAD(+)</name>
        <dbReference type="ChEBI" id="CHEBI:57540"/>
    </ligand>
</feature>
<feature type="site" description="Important for catalysis" evidence="1">
    <location>
        <position position="139"/>
    </location>
</feature>
<feature type="site" description="Important for catalysis" evidence="1">
    <location>
        <position position="185"/>
    </location>
</feature>
<evidence type="ECO:0000255" key="1">
    <source>
        <dbReference type="HAMAP-Rule" id="MF_01033"/>
    </source>
</evidence>
<keyword id="KW-0028">Amino-acid biosynthesis</keyword>
<keyword id="KW-0100">Branched-chain amino acid biosynthesis</keyword>
<keyword id="KW-0963">Cytoplasm</keyword>
<keyword id="KW-0432">Leucine biosynthesis</keyword>
<keyword id="KW-0460">Magnesium</keyword>
<keyword id="KW-0464">Manganese</keyword>
<keyword id="KW-0479">Metal-binding</keyword>
<keyword id="KW-0520">NAD</keyword>
<keyword id="KW-0560">Oxidoreductase</keyword>
<name>LEU3_STAAB</name>
<reference key="1">
    <citation type="journal article" date="2007" name="PLoS ONE">
        <title>Molecular correlates of host specialization in Staphylococcus aureus.</title>
        <authorList>
            <person name="Herron-Olson L."/>
            <person name="Fitzgerald J.R."/>
            <person name="Musser J.M."/>
            <person name="Kapur V."/>
        </authorList>
    </citation>
    <scope>NUCLEOTIDE SEQUENCE [LARGE SCALE GENOMIC DNA]</scope>
    <source>
        <strain>bovine RF122 / ET3-1</strain>
    </source>
</reference>
<organism>
    <name type="scientific">Staphylococcus aureus (strain bovine RF122 / ET3-1)</name>
    <dbReference type="NCBI Taxonomy" id="273036"/>
    <lineage>
        <taxon>Bacteria</taxon>
        <taxon>Bacillati</taxon>
        <taxon>Bacillota</taxon>
        <taxon>Bacilli</taxon>
        <taxon>Bacillales</taxon>
        <taxon>Staphylococcaceae</taxon>
        <taxon>Staphylococcus</taxon>
    </lineage>
</organism>
<protein>
    <recommendedName>
        <fullName evidence="1">3-isopropylmalate dehydrogenase</fullName>
        <ecNumber evidence="1">1.1.1.85</ecNumber>
    </recommendedName>
    <alternativeName>
        <fullName evidence="1">3-IPM-DH</fullName>
    </alternativeName>
    <alternativeName>
        <fullName evidence="1">Beta-IPM dehydrogenase</fullName>
        <shortName evidence="1">IMDH</shortName>
    </alternativeName>
</protein>
<gene>
    <name evidence="1" type="primary">leuB</name>
    <name type="ordered locus">SAB1943</name>
</gene>
<accession>Q2YUF1</accession>
<proteinExistence type="inferred from homology"/>
<dbReference type="EC" id="1.1.1.85" evidence="1"/>
<dbReference type="EMBL" id="AJ938182">
    <property type="protein sequence ID" value="CAI81632.1"/>
    <property type="molecule type" value="Genomic_DNA"/>
</dbReference>
<dbReference type="RefSeq" id="WP_000221935.1">
    <property type="nucleotide sequence ID" value="NC_007622.1"/>
</dbReference>
<dbReference type="SMR" id="Q2YUF1"/>
<dbReference type="KEGG" id="sab:SAB1943"/>
<dbReference type="HOGENOM" id="CLU_031953_0_3_9"/>
<dbReference type="UniPathway" id="UPA00048">
    <property type="reaction ID" value="UER00072"/>
</dbReference>
<dbReference type="GO" id="GO:0005829">
    <property type="term" value="C:cytosol"/>
    <property type="evidence" value="ECO:0007669"/>
    <property type="project" value="TreeGrafter"/>
</dbReference>
<dbReference type="GO" id="GO:0003862">
    <property type="term" value="F:3-isopropylmalate dehydrogenase activity"/>
    <property type="evidence" value="ECO:0007669"/>
    <property type="project" value="UniProtKB-UniRule"/>
</dbReference>
<dbReference type="GO" id="GO:0000287">
    <property type="term" value="F:magnesium ion binding"/>
    <property type="evidence" value="ECO:0007669"/>
    <property type="project" value="InterPro"/>
</dbReference>
<dbReference type="GO" id="GO:0051287">
    <property type="term" value="F:NAD binding"/>
    <property type="evidence" value="ECO:0007669"/>
    <property type="project" value="InterPro"/>
</dbReference>
<dbReference type="GO" id="GO:0009098">
    <property type="term" value="P:L-leucine biosynthetic process"/>
    <property type="evidence" value="ECO:0007669"/>
    <property type="project" value="UniProtKB-UniRule"/>
</dbReference>
<dbReference type="FunFam" id="3.40.718.10:FF:000006">
    <property type="entry name" value="3-isopropylmalate dehydrogenase"/>
    <property type="match status" value="1"/>
</dbReference>
<dbReference type="Gene3D" id="3.40.718.10">
    <property type="entry name" value="Isopropylmalate Dehydrogenase"/>
    <property type="match status" value="1"/>
</dbReference>
<dbReference type="HAMAP" id="MF_01033">
    <property type="entry name" value="LeuB_type1"/>
    <property type="match status" value="1"/>
</dbReference>
<dbReference type="InterPro" id="IPR019818">
    <property type="entry name" value="IsoCit/isopropylmalate_DH_CS"/>
</dbReference>
<dbReference type="InterPro" id="IPR024084">
    <property type="entry name" value="IsoPropMal-DH-like_dom"/>
</dbReference>
<dbReference type="InterPro" id="IPR004429">
    <property type="entry name" value="Isopropylmalate_DH"/>
</dbReference>
<dbReference type="NCBIfam" id="TIGR00169">
    <property type="entry name" value="leuB"/>
    <property type="match status" value="1"/>
</dbReference>
<dbReference type="PANTHER" id="PTHR42979">
    <property type="entry name" value="3-ISOPROPYLMALATE DEHYDROGENASE"/>
    <property type="match status" value="1"/>
</dbReference>
<dbReference type="PANTHER" id="PTHR42979:SF1">
    <property type="entry name" value="3-ISOPROPYLMALATE DEHYDROGENASE"/>
    <property type="match status" value="1"/>
</dbReference>
<dbReference type="Pfam" id="PF00180">
    <property type="entry name" value="Iso_dh"/>
    <property type="match status" value="1"/>
</dbReference>
<dbReference type="SMART" id="SM01329">
    <property type="entry name" value="Iso_dh"/>
    <property type="match status" value="1"/>
</dbReference>
<dbReference type="SUPFAM" id="SSF53659">
    <property type="entry name" value="Isocitrate/Isopropylmalate dehydrogenase-like"/>
    <property type="match status" value="1"/>
</dbReference>
<dbReference type="PROSITE" id="PS00470">
    <property type="entry name" value="IDH_IMDH"/>
    <property type="match status" value="1"/>
</dbReference>
<comment type="function">
    <text evidence="1">Catalyzes the oxidation of 3-carboxy-2-hydroxy-4-methylpentanoate (3-isopropylmalate) to 3-carboxy-4-methyl-2-oxopentanoate. The product decarboxylates to 4-methyl-2 oxopentanoate.</text>
</comment>
<comment type="catalytic activity">
    <reaction evidence="1">
        <text>(2R,3S)-3-isopropylmalate + NAD(+) = 4-methyl-2-oxopentanoate + CO2 + NADH</text>
        <dbReference type="Rhea" id="RHEA:32271"/>
        <dbReference type="ChEBI" id="CHEBI:16526"/>
        <dbReference type="ChEBI" id="CHEBI:17865"/>
        <dbReference type="ChEBI" id="CHEBI:35121"/>
        <dbReference type="ChEBI" id="CHEBI:57540"/>
        <dbReference type="ChEBI" id="CHEBI:57945"/>
        <dbReference type="EC" id="1.1.1.85"/>
    </reaction>
</comment>
<comment type="cofactor">
    <cofactor evidence="1">
        <name>Mg(2+)</name>
        <dbReference type="ChEBI" id="CHEBI:18420"/>
    </cofactor>
    <cofactor evidence="1">
        <name>Mn(2+)</name>
        <dbReference type="ChEBI" id="CHEBI:29035"/>
    </cofactor>
    <text evidence="1">Binds 1 Mg(2+) or Mn(2+) ion per subunit.</text>
</comment>
<comment type="pathway">
    <text evidence="1">Amino-acid biosynthesis; L-leucine biosynthesis; L-leucine from 3-methyl-2-oxobutanoate: step 3/4.</text>
</comment>
<comment type="subunit">
    <text evidence="1">Homodimer.</text>
</comment>
<comment type="subcellular location">
    <subcellularLocation>
        <location evidence="1">Cytoplasm</location>
    </subcellularLocation>
</comment>
<comment type="similarity">
    <text evidence="1">Belongs to the isocitrate and isopropylmalate dehydrogenases family. LeuB type 1 subfamily.</text>
</comment>
<sequence>MTYNIVALPGDGIGPEILNGSLSLLEIISNKYNFNYQIEHHEFGGASIDTFGEPLTEKTLNACKRADAILLGAIGGPKWTDPNNRPEQGLLKLRKSLNLFANIRPTTVFKGASSLSPLKQERVEGTDLVIVRELTSGIYFGEPRHFNNHEALDSLTYTREEIERIVHVAFKLAASRRGKLTSVDKENVLASSKLWRKVVNEVSQLYPEVTVNHLLVDACSMHLITNPKQFDVIVCENLFGDILSDEASVIPGSLGLSPSASFSNDGPRLYEPIHGSAPDIAGKNVANPFGMILSLAMCLRESLNQPDAADELEQHIYNMIENGQTTADLGGKLNTTDIFEILSQKLNH</sequence>